<sequence length="122" mass="14011">MARIAGVDLPRNKRVEIGLTYIYGIGRSTSNKILKVTGIDPDTRVKDLTEAEIAKLREEVDKYQVEGDLRREIRANIKRLMDIGCYRGIRHRKNLPVRGQRTRTNARTRKGPKKTVGVRRAK</sequence>
<protein>
    <recommendedName>
        <fullName evidence="1">Small ribosomal subunit protein uS13</fullName>
    </recommendedName>
    <alternativeName>
        <fullName evidence="3">30S ribosomal protein S13</fullName>
    </alternativeName>
</protein>
<comment type="function">
    <text evidence="1">Located at the top of the head of the 30S subunit, it contacts several helices of the 16S rRNA. In the 70S ribosome it contacts the 23S rRNA (bridge B1a) and protein L5 of the 50S subunit (bridge B1b), connecting the 2 subunits; these bridges are implicated in subunit movement. Contacts the tRNAs in the A and P-sites.</text>
</comment>
<comment type="subunit">
    <text evidence="1">Part of the 30S ribosomal subunit. Forms a loose heterodimer with protein S19. Forms two bridges to the 50S subunit in the 70S ribosome.</text>
</comment>
<comment type="similarity">
    <text evidence="1">Belongs to the universal ribosomal protein uS13 family.</text>
</comment>
<accession>B8D0T4</accession>
<proteinExistence type="inferred from homology"/>
<keyword id="KW-1185">Reference proteome</keyword>
<keyword id="KW-0687">Ribonucleoprotein</keyword>
<keyword id="KW-0689">Ribosomal protein</keyword>
<keyword id="KW-0694">RNA-binding</keyword>
<keyword id="KW-0699">rRNA-binding</keyword>
<keyword id="KW-0820">tRNA-binding</keyword>
<organism>
    <name type="scientific">Halothermothrix orenii (strain H 168 / OCM 544 / DSM 9562)</name>
    <dbReference type="NCBI Taxonomy" id="373903"/>
    <lineage>
        <taxon>Bacteria</taxon>
        <taxon>Bacillati</taxon>
        <taxon>Bacillota</taxon>
        <taxon>Clostridia</taxon>
        <taxon>Halanaerobiales</taxon>
        <taxon>Halothermotrichaceae</taxon>
        <taxon>Halothermothrix</taxon>
    </lineage>
</organism>
<feature type="chain" id="PRO_1000165622" description="Small ribosomal subunit protein uS13">
    <location>
        <begin position="1"/>
        <end position="122"/>
    </location>
</feature>
<feature type="region of interest" description="Disordered" evidence="2">
    <location>
        <begin position="96"/>
        <end position="122"/>
    </location>
</feature>
<reference key="1">
    <citation type="journal article" date="2009" name="PLoS ONE">
        <title>Genome analysis of the anaerobic thermohalophilic bacterium Halothermothrix orenii.</title>
        <authorList>
            <person name="Mavromatis K."/>
            <person name="Ivanova N."/>
            <person name="Anderson I."/>
            <person name="Lykidis A."/>
            <person name="Hooper S.D."/>
            <person name="Sun H."/>
            <person name="Kunin V."/>
            <person name="Lapidus A."/>
            <person name="Hugenholtz P."/>
            <person name="Patel B."/>
            <person name="Kyrpides N.C."/>
        </authorList>
    </citation>
    <scope>NUCLEOTIDE SEQUENCE [LARGE SCALE GENOMIC DNA]</scope>
    <source>
        <strain>H 168 / OCM 544 / DSM 9562</strain>
    </source>
</reference>
<evidence type="ECO:0000255" key="1">
    <source>
        <dbReference type="HAMAP-Rule" id="MF_01315"/>
    </source>
</evidence>
<evidence type="ECO:0000256" key="2">
    <source>
        <dbReference type="SAM" id="MobiDB-lite"/>
    </source>
</evidence>
<evidence type="ECO:0000305" key="3"/>
<gene>
    <name evidence="1" type="primary">rpsM</name>
    <name type="ordered locus">Hore_01420</name>
</gene>
<name>RS13_HALOH</name>
<dbReference type="EMBL" id="CP001098">
    <property type="protein sequence ID" value="ACL68903.1"/>
    <property type="molecule type" value="Genomic_DNA"/>
</dbReference>
<dbReference type="RefSeq" id="WP_012635101.1">
    <property type="nucleotide sequence ID" value="NC_011899.1"/>
</dbReference>
<dbReference type="SMR" id="B8D0T4"/>
<dbReference type="STRING" id="373903.Hore_01420"/>
<dbReference type="KEGG" id="hor:Hore_01420"/>
<dbReference type="eggNOG" id="COG0099">
    <property type="taxonomic scope" value="Bacteria"/>
</dbReference>
<dbReference type="HOGENOM" id="CLU_103849_1_2_9"/>
<dbReference type="OrthoDB" id="9803610at2"/>
<dbReference type="Proteomes" id="UP000000719">
    <property type="component" value="Chromosome"/>
</dbReference>
<dbReference type="GO" id="GO:0005829">
    <property type="term" value="C:cytosol"/>
    <property type="evidence" value="ECO:0007669"/>
    <property type="project" value="TreeGrafter"/>
</dbReference>
<dbReference type="GO" id="GO:0015935">
    <property type="term" value="C:small ribosomal subunit"/>
    <property type="evidence" value="ECO:0007669"/>
    <property type="project" value="TreeGrafter"/>
</dbReference>
<dbReference type="GO" id="GO:0019843">
    <property type="term" value="F:rRNA binding"/>
    <property type="evidence" value="ECO:0007669"/>
    <property type="project" value="UniProtKB-UniRule"/>
</dbReference>
<dbReference type="GO" id="GO:0003735">
    <property type="term" value="F:structural constituent of ribosome"/>
    <property type="evidence" value="ECO:0007669"/>
    <property type="project" value="InterPro"/>
</dbReference>
<dbReference type="GO" id="GO:0000049">
    <property type="term" value="F:tRNA binding"/>
    <property type="evidence" value="ECO:0007669"/>
    <property type="project" value="UniProtKB-UniRule"/>
</dbReference>
<dbReference type="GO" id="GO:0006412">
    <property type="term" value="P:translation"/>
    <property type="evidence" value="ECO:0007669"/>
    <property type="project" value="UniProtKB-UniRule"/>
</dbReference>
<dbReference type="FunFam" id="1.10.8.50:FF:000001">
    <property type="entry name" value="30S ribosomal protein S13"/>
    <property type="match status" value="1"/>
</dbReference>
<dbReference type="FunFam" id="4.10.910.10:FF:000001">
    <property type="entry name" value="30S ribosomal protein S13"/>
    <property type="match status" value="1"/>
</dbReference>
<dbReference type="Gene3D" id="1.10.8.50">
    <property type="match status" value="1"/>
</dbReference>
<dbReference type="Gene3D" id="4.10.910.10">
    <property type="entry name" value="30s ribosomal protein s13, domain 2"/>
    <property type="match status" value="1"/>
</dbReference>
<dbReference type="HAMAP" id="MF_01315">
    <property type="entry name" value="Ribosomal_uS13"/>
    <property type="match status" value="1"/>
</dbReference>
<dbReference type="InterPro" id="IPR027437">
    <property type="entry name" value="Rbsml_uS13_C"/>
</dbReference>
<dbReference type="InterPro" id="IPR001892">
    <property type="entry name" value="Ribosomal_uS13"/>
</dbReference>
<dbReference type="InterPro" id="IPR010979">
    <property type="entry name" value="Ribosomal_uS13-like_H2TH"/>
</dbReference>
<dbReference type="InterPro" id="IPR019980">
    <property type="entry name" value="Ribosomal_uS13_bac-type"/>
</dbReference>
<dbReference type="InterPro" id="IPR018269">
    <property type="entry name" value="Ribosomal_uS13_CS"/>
</dbReference>
<dbReference type="NCBIfam" id="TIGR03631">
    <property type="entry name" value="uS13_bact"/>
    <property type="match status" value="1"/>
</dbReference>
<dbReference type="PANTHER" id="PTHR10871">
    <property type="entry name" value="30S RIBOSOMAL PROTEIN S13/40S RIBOSOMAL PROTEIN S18"/>
    <property type="match status" value="1"/>
</dbReference>
<dbReference type="PANTHER" id="PTHR10871:SF1">
    <property type="entry name" value="SMALL RIBOSOMAL SUBUNIT PROTEIN US13M"/>
    <property type="match status" value="1"/>
</dbReference>
<dbReference type="Pfam" id="PF00416">
    <property type="entry name" value="Ribosomal_S13"/>
    <property type="match status" value="1"/>
</dbReference>
<dbReference type="PIRSF" id="PIRSF002134">
    <property type="entry name" value="Ribosomal_S13"/>
    <property type="match status" value="1"/>
</dbReference>
<dbReference type="SUPFAM" id="SSF46946">
    <property type="entry name" value="S13-like H2TH domain"/>
    <property type="match status" value="1"/>
</dbReference>
<dbReference type="PROSITE" id="PS00646">
    <property type="entry name" value="RIBOSOMAL_S13_1"/>
    <property type="match status" value="1"/>
</dbReference>
<dbReference type="PROSITE" id="PS50159">
    <property type="entry name" value="RIBOSOMAL_S13_2"/>
    <property type="match status" value="1"/>
</dbReference>